<keyword id="KW-0028">Amino-acid biosynthesis</keyword>
<keyword id="KW-0963">Cytoplasm</keyword>
<keyword id="KW-0223">Dioxygenase</keyword>
<keyword id="KW-0408">Iron</keyword>
<keyword id="KW-0479">Metal-binding</keyword>
<keyword id="KW-0486">Methionine biosynthesis</keyword>
<keyword id="KW-0533">Nickel</keyword>
<keyword id="KW-0539">Nucleus</keyword>
<keyword id="KW-0560">Oxidoreductase</keyword>
<keyword id="KW-1185">Reference proteome</keyword>
<sequence length="179" mass="20879">MVKVYIHDNKVDSDYRAPHNSGTELSLDELAKLGVIYKYCANEEEVNEIARQREYKNRDVVNICEGSFKSEAEFNEKLATFYQEHLHEDEEIRYCLEGAGYFDVRDASTPENWIRCLVESGDLLILPPGIYHRFTLTTSNHIKALRLFKDEPKWQAINRSNQADSLPVRKDYIALINQY</sequence>
<name>MTND_YEAST</name>
<accession>Q03677</accession>
<accession>D6VZI3</accession>
<comment type="function">
    <text evidence="1 2 4">Catalyzes 2 different reactions between oxygen and the acireductone 1,2-dihydroxy-3-keto-5-methylthiopentene (DHK-MTPene) depending upon the metal bound in the active site (By similarity). Fe-containing acireductone dioxygenase (Fe-ARD) produces formate and 2-keto-4-methylthiobutyrate (KMTB), the alpha-ketoacid precursor of methionine in the methionine recycle pathway (PubMed:15938715, PubMed:18625006). Ni-containing acireductone dioxygenase (Ni-ARD) produces methylthiopropionate, carbon monoxide and formate, and does not lie on the methionine recycle pathway (By similarity).</text>
</comment>
<comment type="catalytic activity">
    <reaction evidence="1 2">
        <text>1,2-dihydroxy-5-(methylsulfanyl)pent-1-en-3-one + O2 = 4-methylsulfanyl-2-oxobutanoate + formate + 2 H(+)</text>
        <dbReference type="Rhea" id="RHEA:24504"/>
        <dbReference type="ChEBI" id="CHEBI:15378"/>
        <dbReference type="ChEBI" id="CHEBI:15379"/>
        <dbReference type="ChEBI" id="CHEBI:15740"/>
        <dbReference type="ChEBI" id="CHEBI:16723"/>
        <dbReference type="ChEBI" id="CHEBI:49252"/>
        <dbReference type="EC" id="1.13.11.54"/>
    </reaction>
</comment>
<comment type="catalytic activity">
    <reaction evidence="1">
        <text>1,2-dihydroxy-5-(methylsulfanyl)pent-1-en-3-one + O2 = 3-(methylsulfanyl)propanoate + CO + formate + 2 H(+)</text>
        <dbReference type="Rhea" id="RHEA:14161"/>
        <dbReference type="ChEBI" id="CHEBI:15378"/>
        <dbReference type="ChEBI" id="CHEBI:15379"/>
        <dbReference type="ChEBI" id="CHEBI:15740"/>
        <dbReference type="ChEBI" id="CHEBI:17245"/>
        <dbReference type="ChEBI" id="CHEBI:49016"/>
        <dbReference type="ChEBI" id="CHEBI:49252"/>
        <dbReference type="EC" id="1.13.11.53"/>
    </reaction>
</comment>
<comment type="cofactor">
    <cofactor evidence="1">
        <name>Fe(2+)</name>
        <dbReference type="ChEBI" id="CHEBI:29033"/>
    </cofactor>
    <cofactor evidence="1">
        <name>Ni(2+)</name>
        <dbReference type="ChEBI" id="CHEBI:49786"/>
    </cofactor>
    <text evidence="1">Binds either 1 Fe or Ni cation per monomer. Iron-binding promotes an acireductone dioxygenase reaction producing 2-keto-4-methylthiobutyrate, while nickel-binding promotes an acireductone dioxygenase reaction producing 3-(methylsulfanyl)propanoate.</text>
</comment>
<comment type="pathway">
    <text evidence="1 2 4">Amino-acid biosynthesis; L-methionine biosynthesis via salvage pathway; L-methionine from S-methyl-5-thio-alpha-D-ribose 1-phosphate: step 5/6.</text>
</comment>
<comment type="subcellular location">
    <subcellularLocation>
        <location>Cytoplasm</location>
    </subcellularLocation>
    <subcellularLocation>
        <location>Nucleus</location>
    </subcellularLocation>
</comment>
<comment type="induction">
    <text evidence="3">By heat shock.</text>
</comment>
<comment type="similarity">
    <text evidence="1">Belongs to the acireductone dioxygenase (ARD) family.</text>
</comment>
<reference key="1">
    <citation type="journal article" date="1997" name="Nature">
        <title>The nucleotide sequence of Saccharomyces cerevisiae chromosome XIII.</title>
        <authorList>
            <person name="Bowman S."/>
            <person name="Churcher C.M."/>
            <person name="Badcock K."/>
            <person name="Brown D."/>
            <person name="Chillingworth T."/>
            <person name="Connor R."/>
            <person name="Dedman K."/>
            <person name="Devlin K."/>
            <person name="Gentles S."/>
            <person name="Hamlin N."/>
            <person name="Hunt S."/>
            <person name="Jagels K."/>
            <person name="Lye G."/>
            <person name="Moule S."/>
            <person name="Odell C."/>
            <person name="Pearson D."/>
            <person name="Rajandream M.A."/>
            <person name="Rice P."/>
            <person name="Skelton J."/>
            <person name="Walsh S.V."/>
            <person name="Whitehead S."/>
            <person name="Barrell B.G."/>
        </authorList>
    </citation>
    <scope>NUCLEOTIDE SEQUENCE [LARGE SCALE GENOMIC DNA]</scope>
    <source>
        <strain>ATCC 204508 / S288c</strain>
    </source>
</reference>
<reference key="2">
    <citation type="journal article" date="2014" name="G3 (Bethesda)">
        <title>The reference genome sequence of Saccharomyces cerevisiae: Then and now.</title>
        <authorList>
            <person name="Engel S.R."/>
            <person name="Dietrich F.S."/>
            <person name="Fisk D.G."/>
            <person name="Binkley G."/>
            <person name="Balakrishnan R."/>
            <person name="Costanzo M.C."/>
            <person name="Dwight S.S."/>
            <person name="Hitz B.C."/>
            <person name="Karra K."/>
            <person name="Nash R.S."/>
            <person name="Weng S."/>
            <person name="Wong E.D."/>
            <person name="Lloyd P."/>
            <person name="Skrzypek M.S."/>
            <person name="Miyasato S.R."/>
            <person name="Simison M."/>
            <person name="Cherry J.M."/>
        </authorList>
    </citation>
    <scope>GENOME REANNOTATION</scope>
    <source>
        <strain>ATCC 204508 / S288c</strain>
    </source>
</reference>
<reference key="3">
    <citation type="journal article" date="2007" name="Genome Res.">
        <title>Approaching a complete repository of sequence-verified protein-encoding clones for Saccharomyces cerevisiae.</title>
        <authorList>
            <person name="Hu Y."/>
            <person name="Rolfs A."/>
            <person name="Bhullar B."/>
            <person name="Murthy T.V.S."/>
            <person name="Zhu C."/>
            <person name="Berger M.F."/>
            <person name="Camargo A.A."/>
            <person name="Kelley F."/>
            <person name="McCarron S."/>
            <person name="Jepson D."/>
            <person name="Richardson A."/>
            <person name="Raphael J."/>
            <person name="Moreira D."/>
            <person name="Taycher E."/>
            <person name="Zuo D."/>
            <person name="Mohr S."/>
            <person name="Kane M.F."/>
            <person name="Williamson J."/>
            <person name="Simpson A.J.G."/>
            <person name="Bulyk M.L."/>
            <person name="Harlow E."/>
            <person name="Marsischky G."/>
            <person name="Kolodner R.D."/>
            <person name="LaBaer J."/>
        </authorList>
    </citation>
    <scope>NUCLEOTIDE SEQUENCE [GENOMIC DNA]</scope>
    <source>
        <strain>ATCC 204508 / S288c</strain>
    </source>
</reference>
<reference key="4">
    <citation type="journal article" date="2003" name="Nature">
        <title>Global analysis of protein localization in budding yeast.</title>
        <authorList>
            <person name="Huh W.-K."/>
            <person name="Falvo J.V."/>
            <person name="Gerke L.C."/>
            <person name="Carroll A.S."/>
            <person name="Howson R.W."/>
            <person name="Weissman J.S."/>
            <person name="O'Shea E.K."/>
        </authorList>
    </citation>
    <scope>SUBCELLULAR LOCATION [LARGE SCALE ANALYSIS]</scope>
</reference>
<reference key="5">
    <citation type="journal article" date="2005" name="Genes Cells">
        <title>Membrane-type 1 matrix metalloproteinase cytoplasmic tail binding protein-1 (MTCBP-1) acts as an eukaryotic aci-reductone dioxygenase (ARD) in the methionine salvage pathway.</title>
        <authorList>
            <person name="Hirano W."/>
            <person name="Gotoh I."/>
            <person name="Uekita T."/>
            <person name="Seiki M."/>
        </authorList>
    </citation>
    <scope>FUNCTION</scope>
    <scope>SUBCELLULAR LOCATION</scope>
    <scope>CATALYTIC ACTIVITY</scope>
    <scope>PATHWAY</scope>
    <scope>MUTAGENESIS OF GLU-24; GLU-45; GLU-91 AND GLU-151</scope>
</reference>
<reference key="6">
    <citation type="journal article" date="2005" name="J. Biol. Chem.">
        <title>Regulation and surveillance of normal and 3'-extended forms of the yeast aci-reductone dioxygenase mRNA by RNase III cleavage and exonucleolytic degradation.</title>
        <authorList>
            <person name="Zer C."/>
            <person name="Chanfreau G."/>
        </authorList>
    </citation>
    <scope>INDUCTION</scope>
</reference>
<reference key="7">
    <citation type="journal article" date="2008" name="FEBS J.">
        <title>A complete inventory of all enzymes in the eukaryotic methionine salvage pathway.</title>
        <authorList>
            <person name="Pirkov I."/>
            <person name="Norbeck J."/>
            <person name="Gustafsson L."/>
            <person name="Albers E."/>
        </authorList>
    </citation>
    <scope>FUNCTION</scope>
    <scope>PATHWAY</scope>
</reference>
<proteinExistence type="evidence at protein level"/>
<protein>
    <recommendedName>
        <fullName evidence="1">Acireductone dioxygenase</fullName>
    </recommendedName>
    <alternativeName>
        <fullName evidence="1">Acireductone dioxygenase (Fe(2+)-requiring)</fullName>
        <shortName evidence="1">ARD'</shortName>
        <shortName evidence="1">Fe-ARD</shortName>
        <ecNumber evidence="1 2">1.13.11.54</ecNumber>
    </alternativeName>
    <alternativeName>
        <fullName evidence="1">Acireductone dioxygenase (Ni(2+)-requiring)</fullName>
        <shortName evidence="1">ARD</shortName>
        <shortName evidence="1">Ni-ARD</shortName>
        <ecNumber evidence="1">1.13.11.53</ecNumber>
    </alternativeName>
</protein>
<feature type="chain" id="PRO_0000162946" description="Acireductone dioxygenase">
    <location>
        <begin position="1"/>
        <end position="179"/>
    </location>
</feature>
<feature type="binding site" evidence="1">
    <location>
        <position position="85"/>
    </location>
    <ligand>
        <name>Fe(2+)</name>
        <dbReference type="ChEBI" id="CHEBI:29033"/>
        <note>for iron-dependent acireductone dioxygenase activity</note>
    </ligand>
</feature>
<feature type="binding site" evidence="1">
    <location>
        <position position="85"/>
    </location>
    <ligand>
        <name>Ni(2+)</name>
        <dbReference type="ChEBI" id="CHEBI:49786"/>
        <note>for nickel-dependent acireductone dioxygenase activity</note>
    </ligand>
</feature>
<feature type="binding site" evidence="1">
    <location>
        <position position="87"/>
    </location>
    <ligand>
        <name>Fe(2+)</name>
        <dbReference type="ChEBI" id="CHEBI:29033"/>
        <note>for iron-dependent acireductone dioxygenase activity</note>
    </ligand>
</feature>
<feature type="binding site" evidence="1">
    <location>
        <position position="87"/>
    </location>
    <ligand>
        <name>Ni(2+)</name>
        <dbReference type="ChEBI" id="CHEBI:49786"/>
        <note>for nickel-dependent acireductone dioxygenase activity</note>
    </ligand>
</feature>
<feature type="binding site" evidence="1">
    <location>
        <position position="91"/>
    </location>
    <ligand>
        <name>Fe(2+)</name>
        <dbReference type="ChEBI" id="CHEBI:29033"/>
        <note>for iron-dependent acireductone dioxygenase activity</note>
    </ligand>
</feature>
<feature type="binding site" evidence="1">
    <location>
        <position position="91"/>
    </location>
    <ligand>
        <name>Ni(2+)</name>
        <dbReference type="ChEBI" id="CHEBI:49786"/>
        <note>for nickel-dependent acireductone dioxygenase activity</note>
    </ligand>
</feature>
<feature type="binding site" evidence="1">
    <location>
        <position position="132"/>
    </location>
    <ligand>
        <name>Fe(2+)</name>
        <dbReference type="ChEBI" id="CHEBI:29033"/>
        <note>for iron-dependent acireductone dioxygenase activity</note>
    </ligand>
</feature>
<feature type="binding site" evidence="1">
    <location>
        <position position="132"/>
    </location>
    <ligand>
        <name>Ni(2+)</name>
        <dbReference type="ChEBI" id="CHEBI:49786"/>
        <note>for nickel-dependent acireductone dioxygenase activity</note>
    </ligand>
</feature>
<feature type="mutagenesis site" description="No loss of acireductone dioxygenase activity." evidence="2">
    <original>E</original>
    <variation>A</variation>
    <location>
        <position position="24"/>
    </location>
</feature>
<feature type="mutagenesis site" description="No loss of acireductone dioxygenase activity." evidence="2">
    <original>E</original>
    <variation>A</variation>
    <location>
        <position position="45"/>
    </location>
</feature>
<feature type="mutagenesis site" description="Loss of acireductone dioxygenase activity." evidence="2">
    <original>E</original>
    <variation>A</variation>
    <location>
        <position position="91"/>
    </location>
</feature>
<feature type="mutagenesis site" description="No loss of acireductone dioxygenase activity." evidence="2">
    <original>E</original>
    <variation>A</variation>
    <location>
        <position position="151"/>
    </location>
</feature>
<organism>
    <name type="scientific">Saccharomyces cerevisiae (strain ATCC 204508 / S288c)</name>
    <name type="common">Baker's yeast</name>
    <dbReference type="NCBI Taxonomy" id="559292"/>
    <lineage>
        <taxon>Eukaryota</taxon>
        <taxon>Fungi</taxon>
        <taxon>Dikarya</taxon>
        <taxon>Ascomycota</taxon>
        <taxon>Saccharomycotina</taxon>
        <taxon>Saccharomycetes</taxon>
        <taxon>Saccharomycetales</taxon>
        <taxon>Saccharomycetaceae</taxon>
        <taxon>Saccharomyces</taxon>
    </lineage>
</organism>
<evidence type="ECO:0000255" key="1">
    <source>
        <dbReference type="HAMAP-Rule" id="MF_03154"/>
    </source>
</evidence>
<evidence type="ECO:0000269" key="2">
    <source>
    </source>
</evidence>
<evidence type="ECO:0000269" key="3">
    <source>
    </source>
</evidence>
<evidence type="ECO:0000269" key="4">
    <source>
    </source>
</evidence>
<dbReference type="EC" id="1.13.11.54" evidence="1 2"/>
<dbReference type="EC" id="1.13.11.53" evidence="1"/>
<dbReference type="EMBL" id="Z48613">
    <property type="protein sequence ID" value="CAA88525.1"/>
    <property type="molecule type" value="Genomic_DNA"/>
</dbReference>
<dbReference type="EMBL" id="AY558584">
    <property type="protein sequence ID" value="AAS56910.1"/>
    <property type="molecule type" value="Genomic_DNA"/>
</dbReference>
<dbReference type="EMBL" id="BK006946">
    <property type="protein sequence ID" value="DAA09907.1"/>
    <property type="molecule type" value="Genomic_DNA"/>
</dbReference>
<dbReference type="PIR" id="S53039">
    <property type="entry name" value="S53039"/>
</dbReference>
<dbReference type="RefSeq" id="NP_013722.1">
    <property type="nucleotide sequence ID" value="NM_001182505.1"/>
</dbReference>
<dbReference type="SMR" id="Q03677"/>
<dbReference type="BioGRID" id="35178">
    <property type="interactions" value="100"/>
</dbReference>
<dbReference type="DIP" id="DIP-877N"/>
<dbReference type="FunCoup" id="Q03677">
    <property type="interactions" value="362"/>
</dbReference>
<dbReference type="IntAct" id="Q03677">
    <property type="interactions" value="1"/>
</dbReference>
<dbReference type="STRING" id="4932.YMR009W"/>
<dbReference type="PaxDb" id="4932-YMR009W"/>
<dbReference type="PeptideAtlas" id="Q03677"/>
<dbReference type="EnsemblFungi" id="YMR009W_mRNA">
    <property type="protein sequence ID" value="YMR009W"/>
    <property type="gene ID" value="YMR009W"/>
</dbReference>
<dbReference type="GeneID" id="855021"/>
<dbReference type="KEGG" id="sce:YMR009W"/>
<dbReference type="AGR" id="SGD:S000004611"/>
<dbReference type="SGD" id="S000004611">
    <property type="gene designation" value="ADI1"/>
</dbReference>
<dbReference type="VEuPathDB" id="FungiDB:YMR009W"/>
<dbReference type="eggNOG" id="KOG2107">
    <property type="taxonomic scope" value="Eukaryota"/>
</dbReference>
<dbReference type="GeneTree" id="ENSGT00390000008195"/>
<dbReference type="HOGENOM" id="CLU_090154_1_0_1"/>
<dbReference type="InParanoid" id="Q03677"/>
<dbReference type="OMA" id="WYMDESQ"/>
<dbReference type="OrthoDB" id="1867259at2759"/>
<dbReference type="BioCyc" id="YEAST:MONOMER3O-186"/>
<dbReference type="Reactome" id="R-SCE-1237112">
    <property type="pathway name" value="Methionine salvage pathway"/>
</dbReference>
<dbReference type="UniPathway" id="UPA00904">
    <property type="reaction ID" value="UER00878"/>
</dbReference>
<dbReference type="BioGRID-ORCS" id="855021">
    <property type="hits" value="0 hits in 10 CRISPR screens"/>
</dbReference>
<dbReference type="PRO" id="PR:Q03677"/>
<dbReference type="Proteomes" id="UP000002311">
    <property type="component" value="Chromosome XIII"/>
</dbReference>
<dbReference type="RNAct" id="Q03677">
    <property type="molecule type" value="protein"/>
</dbReference>
<dbReference type="GO" id="GO:0005737">
    <property type="term" value="C:cytoplasm"/>
    <property type="evidence" value="ECO:0007005"/>
    <property type="project" value="SGD"/>
</dbReference>
<dbReference type="GO" id="GO:0005634">
    <property type="term" value="C:nucleus"/>
    <property type="evidence" value="ECO:0007005"/>
    <property type="project" value="SGD"/>
</dbReference>
<dbReference type="GO" id="GO:0010308">
    <property type="term" value="F:acireductone dioxygenase (Ni2+-requiring) activity"/>
    <property type="evidence" value="ECO:0000315"/>
    <property type="project" value="SGD"/>
</dbReference>
<dbReference type="GO" id="GO:0010309">
    <property type="term" value="F:acireductone dioxygenase [iron(II)-requiring] activity"/>
    <property type="evidence" value="ECO:0000318"/>
    <property type="project" value="GO_Central"/>
</dbReference>
<dbReference type="GO" id="GO:0005506">
    <property type="term" value="F:iron ion binding"/>
    <property type="evidence" value="ECO:0007669"/>
    <property type="project" value="UniProtKB-UniRule"/>
</dbReference>
<dbReference type="GO" id="GO:0016151">
    <property type="term" value="F:nickel cation binding"/>
    <property type="evidence" value="ECO:0007669"/>
    <property type="project" value="UniProtKB-UniRule"/>
</dbReference>
<dbReference type="GO" id="GO:0019509">
    <property type="term" value="P:L-methionine salvage from methylthioadenosine"/>
    <property type="evidence" value="ECO:0000315"/>
    <property type="project" value="SGD"/>
</dbReference>
<dbReference type="GO" id="GO:0006555">
    <property type="term" value="P:methionine metabolic process"/>
    <property type="evidence" value="ECO:0000318"/>
    <property type="project" value="GO_Central"/>
</dbReference>
<dbReference type="CDD" id="cd02232">
    <property type="entry name" value="cupin_ARD"/>
    <property type="match status" value="1"/>
</dbReference>
<dbReference type="FunFam" id="2.60.120.10:FF:000079">
    <property type="entry name" value="1,2-dihydroxy-3-keto-5-methylthiopentene dioxygenase"/>
    <property type="match status" value="1"/>
</dbReference>
<dbReference type="Gene3D" id="2.60.120.10">
    <property type="entry name" value="Jelly Rolls"/>
    <property type="match status" value="1"/>
</dbReference>
<dbReference type="HAMAP" id="MF_03154">
    <property type="entry name" value="Salvage_MtnD_euk"/>
    <property type="match status" value="1"/>
</dbReference>
<dbReference type="InterPro" id="IPR004313">
    <property type="entry name" value="ARD"/>
</dbReference>
<dbReference type="InterPro" id="IPR027496">
    <property type="entry name" value="ARD_euk"/>
</dbReference>
<dbReference type="InterPro" id="IPR014710">
    <property type="entry name" value="RmlC-like_jellyroll"/>
</dbReference>
<dbReference type="InterPro" id="IPR011051">
    <property type="entry name" value="RmlC_Cupin_sf"/>
</dbReference>
<dbReference type="PANTHER" id="PTHR23418">
    <property type="entry name" value="ACIREDUCTONE DIOXYGENASE"/>
    <property type="match status" value="1"/>
</dbReference>
<dbReference type="PANTHER" id="PTHR23418:SF0">
    <property type="entry name" value="ACIREDUCTONE DIOXYGENASE"/>
    <property type="match status" value="1"/>
</dbReference>
<dbReference type="Pfam" id="PF03079">
    <property type="entry name" value="ARD"/>
    <property type="match status" value="1"/>
</dbReference>
<dbReference type="SUPFAM" id="SSF51182">
    <property type="entry name" value="RmlC-like cupins"/>
    <property type="match status" value="1"/>
</dbReference>
<gene>
    <name evidence="1" type="primary">ADI1</name>
    <name type="ordered locus">YMR009W</name>
    <name type="ORF">YM8270.12</name>
</gene>